<organism>
    <name type="scientific">Haemophilus influenzae (strain PittGG)</name>
    <dbReference type="NCBI Taxonomy" id="374931"/>
    <lineage>
        <taxon>Bacteria</taxon>
        <taxon>Pseudomonadati</taxon>
        <taxon>Pseudomonadota</taxon>
        <taxon>Gammaproteobacteria</taxon>
        <taxon>Pasteurellales</taxon>
        <taxon>Pasteurellaceae</taxon>
        <taxon>Haemophilus</taxon>
    </lineage>
</organism>
<evidence type="ECO:0000255" key="1">
    <source>
        <dbReference type="HAMAP-Rule" id="MF_00639"/>
    </source>
</evidence>
<dbReference type="EC" id="6.3.2.9" evidence="1"/>
<dbReference type="EMBL" id="CP000672">
    <property type="protein sequence ID" value="ABR00666.1"/>
    <property type="molecule type" value="Genomic_DNA"/>
</dbReference>
<dbReference type="SMR" id="A5UIR0"/>
<dbReference type="KEGG" id="hiq:CGSHiGG_09340"/>
<dbReference type="HOGENOM" id="CLU_032540_1_0_6"/>
<dbReference type="UniPathway" id="UPA00219"/>
<dbReference type="Proteomes" id="UP000001990">
    <property type="component" value="Chromosome"/>
</dbReference>
<dbReference type="GO" id="GO:0005737">
    <property type="term" value="C:cytoplasm"/>
    <property type="evidence" value="ECO:0007669"/>
    <property type="project" value="UniProtKB-SubCell"/>
</dbReference>
<dbReference type="GO" id="GO:0005524">
    <property type="term" value="F:ATP binding"/>
    <property type="evidence" value="ECO:0007669"/>
    <property type="project" value="UniProtKB-UniRule"/>
</dbReference>
<dbReference type="GO" id="GO:0008764">
    <property type="term" value="F:UDP-N-acetylmuramoylalanine-D-glutamate ligase activity"/>
    <property type="evidence" value="ECO:0007669"/>
    <property type="project" value="UniProtKB-UniRule"/>
</dbReference>
<dbReference type="GO" id="GO:0051301">
    <property type="term" value="P:cell division"/>
    <property type="evidence" value="ECO:0007669"/>
    <property type="project" value="UniProtKB-KW"/>
</dbReference>
<dbReference type="GO" id="GO:0071555">
    <property type="term" value="P:cell wall organization"/>
    <property type="evidence" value="ECO:0007669"/>
    <property type="project" value="UniProtKB-KW"/>
</dbReference>
<dbReference type="GO" id="GO:0009252">
    <property type="term" value="P:peptidoglycan biosynthetic process"/>
    <property type="evidence" value="ECO:0007669"/>
    <property type="project" value="UniProtKB-UniRule"/>
</dbReference>
<dbReference type="GO" id="GO:0008360">
    <property type="term" value="P:regulation of cell shape"/>
    <property type="evidence" value="ECO:0007669"/>
    <property type="project" value="UniProtKB-KW"/>
</dbReference>
<dbReference type="Gene3D" id="3.90.190.20">
    <property type="entry name" value="Mur ligase, C-terminal domain"/>
    <property type="match status" value="1"/>
</dbReference>
<dbReference type="Gene3D" id="3.40.1190.10">
    <property type="entry name" value="Mur-like, catalytic domain"/>
    <property type="match status" value="1"/>
</dbReference>
<dbReference type="Gene3D" id="3.40.50.720">
    <property type="entry name" value="NAD(P)-binding Rossmann-like Domain"/>
    <property type="match status" value="1"/>
</dbReference>
<dbReference type="HAMAP" id="MF_00639">
    <property type="entry name" value="MurD"/>
    <property type="match status" value="1"/>
</dbReference>
<dbReference type="InterPro" id="IPR036565">
    <property type="entry name" value="Mur-like_cat_sf"/>
</dbReference>
<dbReference type="InterPro" id="IPR004101">
    <property type="entry name" value="Mur_ligase_C"/>
</dbReference>
<dbReference type="InterPro" id="IPR036615">
    <property type="entry name" value="Mur_ligase_C_dom_sf"/>
</dbReference>
<dbReference type="InterPro" id="IPR013221">
    <property type="entry name" value="Mur_ligase_cen"/>
</dbReference>
<dbReference type="InterPro" id="IPR005762">
    <property type="entry name" value="MurD"/>
</dbReference>
<dbReference type="NCBIfam" id="TIGR01087">
    <property type="entry name" value="murD"/>
    <property type="match status" value="1"/>
</dbReference>
<dbReference type="PANTHER" id="PTHR43692">
    <property type="entry name" value="UDP-N-ACETYLMURAMOYLALANINE--D-GLUTAMATE LIGASE"/>
    <property type="match status" value="1"/>
</dbReference>
<dbReference type="PANTHER" id="PTHR43692:SF1">
    <property type="entry name" value="UDP-N-ACETYLMURAMOYLALANINE--D-GLUTAMATE LIGASE"/>
    <property type="match status" value="1"/>
</dbReference>
<dbReference type="Pfam" id="PF02875">
    <property type="entry name" value="Mur_ligase_C"/>
    <property type="match status" value="1"/>
</dbReference>
<dbReference type="Pfam" id="PF08245">
    <property type="entry name" value="Mur_ligase_M"/>
    <property type="match status" value="1"/>
</dbReference>
<dbReference type="Pfam" id="PF21799">
    <property type="entry name" value="MurD-like_N"/>
    <property type="match status" value="1"/>
</dbReference>
<dbReference type="SUPFAM" id="SSF51984">
    <property type="entry name" value="MurCD N-terminal domain"/>
    <property type="match status" value="1"/>
</dbReference>
<dbReference type="SUPFAM" id="SSF53623">
    <property type="entry name" value="MurD-like peptide ligases, catalytic domain"/>
    <property type="match status" value="1"/>
</dbReference>
<dbReference type="SUPFAM" id="SSF53244">
    <property type="entry name" value="MurD-like peptide ligases, peptide-binding domain"/>
    <property type="match status" value="1"/>
</dbReference>
<sequence>MNAYQNKNITIIGLGKTGLSCVDYLLSQQANIRVIDTRKNPTGIDKLPQNIPLHTGSLNQEWLLESDMIVISPGLAVKTPEIQTALKAGVEVIGDIELFCRAATKPIVGITGSNGKSTVTTLVYEMAKAAGVKVGMGGNIGIPALSLLNEDCELYVLELSSFQLETTYSLKAAAVTVLNVTEDHMDRYMDLEDYRQAKLRIHHNAKVGVLNNEDRLTFGENENQAKHTVSFAENSADYWLKTENGKQYLMVKDEVILPCEEATLVGRHNYMNILAATALAQAIGINLDSIRTALRHFKGLDHRFQLVHQANGIRWINDSKATNVGSTVAALAGLYIEGKLHLLLGGDGKGADFSELAELINQPHIICYCFGRDGAQLAKFSSQSYLFETMEQAIEFLRPTLQSGDMVLLSPACASLDQFASFEKRGEEFTHLAQYSV</sequence>
<feature type="chain" id="PRO_1000056885" description="UDP-N-acetylmuramoylalanine--D-glutamate ligase">
    <location>
        <begin position="1"/>
        <end position="437"/>
    </location>
</feature>
<feature type="binding site" evidence="1">
    <location>
        <begin position="112"/>
        <end position="118"/>
    </location>
    <ligand>
        <name>ATP</name>
        <dbReference type="ChEBI" id="CHEBI:30616"/>
    </ligand>
</feature>
<reference key="1">
    <citation type="journal article" date="2007" name="Genome Biol.">
        <title>Characterization and modeling of the Haemophilus influenzae core and supragenomes based on the complete genomic sequences of Rd and 12 clinical nontypeable strains.</title>
        <authorList>
            <person name="Hogg J.S."/>
            <person name="Hu F.Z."/>
            <person name="Janto B."/>
            <person name="Boissy R."/>
            <person name="Hayes J."/>
            <person name="Keefe R."/>
            <person name="Post J.C."/>
            <person name="Ehrlich G.D."/>
        </authorList>
    </citation>
    <scope>NUCLEOTIDE SEQUENCE [LARGE SCALE GENOMIC DNA]</scope>
    <source>
        <strain>PittGG</strain>
    </source>
</reference>
<name>MURD_HAEIG</name>
<keyword id="KW-0067">ATP-binding</keyword>
<keyword id="KW-0131">Cell cycle</keyword>
<keyword id="KW-0132">Cell division</keyword>
<keyword id="KW-0133">Cell shape</keyword>
<keyword id="KW-0961">Cell wall biogenesis/degradation</keyword>
<keyword id="KW-0963">Cytoplasm</keyword>
<keyword id="KW-0436">Ligase</keyword>
<keyword id="KW-0547">Nucleotide-binding</keyword>
<keyword id="KW-0573">Peptidoglycan synthesis</keyword>
<proteinExistence type="inferred from homology"/>
<protein>
    <recommendedName>
        <fullName evidence="1">UDP-N-acetylmuramoylalanine--D-glutamate ligase</fullName>
        <ecNumber evidence="1">6.3.2.9</ecNumber>
    </recommendedName>
    <alternativeName>
        <fullName evidence="1">D-glutamic acid-adding enzyme</fullName>
    </alternativeName>
    <alternativeName>
        <fullName evidence="1">UDP-N-acetylmuramoyl-L-alanyl-D-glutamate synthetase</fullName>
    </alternativeName>
</protein>
<accession>A5UIR0</accession>
<comment type="function">
    <text evidence="1">Cell wall formation. Catalyzes the addition of glutamate to the nucleotide precursor UDP-N-acetylmuramoyl-L-alanine (UMA).</text>
</comment>
<comment type="catalytic activity">
    <reaction evidence="1">
        <text>UDP-N-acetyl-alpha-D-muramoyl-L-alanine + D-glutamate + ATP = UDP-N-acetyl-alpha-D-muramoyl-L-alanyl-D-glutamate + ADP + phosphate + H(+)</text>
        <dbReference type="Rhea" id="RHEA:16429"/>
        <dbReference type="ChEBI" id="CHEBI:15378"/>
        <dbReference type="ChEBI" id="CHEBI:29986"/>
        <dbReference type="ChEBI" id="CHEBI:30616"/>
        <dbReference type="ChEBI" id="CHEBI:43474"/>
        <dbReference type="ChEBI" id="CHEBI:83898"/>
        <dbReference type="ChEBI" id="CHEBI:83900"/>
        <dbReference type="ChEBI" id="CHEBI:456216"/>
        <dbReference type="EC" id="6.3.2.9"/>
    </reaction>
</comment>
<comment type="pathway">
    <text evidence="1">Cell wall biogenesis; peptidoglycan biosynthesis.</text>
</comment>
<comment type="subcellular location">
    <subcellularLocation>
        <location evidence="1">Cytoplasm</location>
    </subcellularLocation>
</comment>
<comment type="similarity">
    <text evidence="1">Belongs to the MurCDEF family.</text>
</comment>
<gene>
    <name evidence="1" type="primary">murD</name>
    <name type="ordered locus">CGSHiGG_09340</name>
</gene>